<evidence type="ECO:0000255" key="1">
    <source>
        <dbReference type="HAMAP-Rule" id="MF_00272"/>
    </source>
</evidence>
<evidence type="ECO:0000255" key="2">
    <source>
        <dbReference type="PROSITE-ProRule" id="PRU01066"/>
    </source>
</evidence>
<keyword id="KW-0450">Lipoyl</keyword>
<accession>B7LPB8</accession>
<proteinExistence type="inferred from homology"/>
<comment type="function">
    <text evidence="1">The glycine cleavage system catalyzes the degradation of glycine. The H protein shuttles the methylamine group of glycine from the P protein to the T protein.</text>
</comment>
<comment type="cofactor">
    <cofactor evidence="1">
        <name>(R)-lipoate</name>
        <dbReference type="ChEBI" id="CHEBI:83088"/>
    </cofactor>
    <text evidence="1">Binds 1 lipoyl cofactor covalently.</text>
</comment>
<comment type="subunit">
    <text evidence="1">The glycine cleavage system is composed of four proteins: P, T, L and H.</text>
</comment>
<comment type="similarity">
    <text evidence="1">Belongs to the GcvH family.</text>
</comment>
<dbReference type="EMBL" id="CU928158">
    <property type="protein sequence ID" value="CAQ90334.1"/>
    <property type="molecule type" value="Genomic_DNA"/>
</dbReference>
<dbReference type="RefSeq" id="WP_001295377.1">
    <property type="nucleotide sequence ID" value="NC_011740.1"/>
</dbReference>
<dbReference type="SMR" id="B7LPB8"/>
<dbReference type="GeneID" id="93779098"/>
<dbReference type="KEGG" id="efe:EFER_2840"/>
<dbReference type="HOGENOM" id="CLU_097408_2_1_6"/>
<dbReference type="OrthoDB" id="9796712at2"/>
<dbReference type="Proteomes" id="UP000000745">
    <property type="component" value="Chromosome"/>
</dbReference>
<dbReference type="GO" id="GO:0005829">
    <property type="term" value="C:cytosol"/>
    <property type="evidence" value="ECO:0007669"/>
    <property type="project" value="TreeGrafter"/>
</dbReference>
<dbReference type="GO" id="GO:0005960">
    <property type="term" value="C:glycine cleavage complex"/>
    <property type="evidence" value="ECO:0007669"/>
    <property type="project" value="InterPro"/>
</dbReference>
<dbReference type="GO" id="GO:0019464">
    <property type="term" value="P:glycine decarboxylation via glycine cleavage system"/>
    <property type="evidence" value="ECO:0007669"/>
    <property type="project" value="UniProtKB-UniRule"/>
</dbReference>
<dbReference type="CDD" id="cd06848">
    <property type="entry name" value="GCS_H"/>
    <property type="match status" value="1"/>
</dbReference>
<dbReference type="FunFam" id="2.40.50.100:FF:000011">
    <property type="entry name" value="Glycine cleavage system H protein"/>
    <property type="match status" value="1"/>
</dbReference>
<dbReference type="Gene3D" id="2.40.50.100">
    <property type="match status" value="1"/>
</dbReference>
<dbReference type="HAMAP" id="MF_00272">
    <property type="entry name" value="GcvH"/>
    <property type="match status" value="1"/>
</dbReference>
<dbReference type="InterPro" id="IPR003016">
    <property type="entry name" value="2-oxoA_DH_lipoyl-BS"/>
</dbReference>
<dbReference type="InterPro" id="IPR000089">
    <property type="entry name" value="Biotin_lipoyl"/>
</dbReference>
<dbReference type="InterPro" id="IPR002930">
    <property type="entry name" value="GCV_H"/>
</dbReference>
<dbReference type="InterPro" id="IPR033753">
    <property type="entry name" value="GCV_H/Fam206"/>
</dbReference>
<dbReference type="InterPro" id="IPR017453">
    <property type="entry name" value="GCV_H_sub"/>
</dbReference>
<dbReference type="InterPro" id="IPR011053">
    <property type="entry name" value="Single_hybrid_motif"/>
</dbReference>
<dbReference type="NCBIfam" id="TIGR00527">
    <property type="entry name" value="gcvH"/>
    <property type="match status" value="1"/>
</dbReference>
<dbReference type="NCBIfam" id="NF002270">
    <property type="entry name" value="PRK01202.1"/>
    <property type="match status" value="1"/>
</dbReference>
<dbReference type="PANTHER" id="PTHR11715">
    <property type="entry name" value="GLYCINE CLEAVAGE SYSTEM H PROTEIN"/>
    <property type="match status" value="1"/>
</dbReference>
<dbReference type="PANTHER" id="PTHR11715:SF3">
    <property type="entry name" value="GLYCINE CLEAVAGE SYSTEM H PROTEIN-RELATED"/>
    <property type="match status" value="1"/>
</dbReference>
<dbReference type="Pfam" id="PF01597">
    <property type="entry name" value="GCV_H"/>
    <property type="match status" value="1"/>
</dbReference>
<dbReference type="SUPFAM" id="SSF51230">
    <property type="entry name" value="Single hybrid motif"/>
    <property type="match status" value="1"/>
</dbReference>
<dbReference type="PROSITE" id="PS50968">
    <property type="entry name" value="BIOTINYL_LIPOYL"/>
    <property type="match status" value="1"/>
</dbReference>
<dbReference type="PROSITE" id="PS00189">
    <property type="entry name" value="LIPOYL"/>
    <property type="match status" value="1"/>
</dbReference>
<feature type="chain" id="PRO_1000119303" description="Glycine cleavage system H protein">
    <location>
        <begin position="1"/>
        <end position="129"/>
    </location>
</feature>
<feature type="domain" description="Lipoyl-binding" evidence="2">
    <location>
        <begin position="24"/>
        <end position="106"/>
    </location>
</feature>
<feature type="modified residue" description="N6-lipoyllysine" evidence="1">
    <location>
        <position position="65"/>
    </location>
</feature>
<sequence length="129" mass="13811">MSNVPAELKYSKEHEWLRKEADGTYTVGITEHAQELLGDMVFVDLPEVGATVSAGDDCAVAESVKAASDIYAPVSGEIVAVNDALSDSPELVNSEPYAGGWIFKIKASDESELESLLDATAYEALLEDE</sequence>
<protein>
    <recommendedName>
        <fullName evidence="1">Glycine cleavage system H protein</fullName>
    </recommendedName>
</protein>
<reference key="1">
    <citation type="journal article" date="2009" name="PLoS Genet.">
        <title>Organised genome dynamics in the Escherichia coli species results in highly diverse adaptive paths.</title>
        <authorList>
            <person name="Touchon M."/>
            <person name="Hoede C."/>
            <person name="Tenaillon O."/>
            <person name="Barbe V."/>
            <person name="Baeriswyl S."/>
            <person name="Bidet P."/>
            <person name="Bingen E."/>
            <person name="Bonacorsi S."/>
            <person name="Bouchier C."/>
            <person name="Bouvet O."/>
            <person name="Calteau A."/>
            <person name="Chiapello H."/>
            <person name="Clermont O."/>
            <person name="Cruveiller S."/>
            <person name="Danchin A."/>
            <person name="Diard M."/>
            <person name="Dossat C."/>
            <person name="Karoui M.E."/>
            <person name="Frapy E."/>
            <person name="Garry L."/>
            <person name="Ghigo J.M."/>
            <person name="Gilles A.M."/>
            <person name="Johnson J."/>
            <person name="Le Bouguenec C."/>
            <person name="Lescat M."/>
            <person name="Mangenot S."/>
            <person name="Martinez-Jehanne V."/>
            <person name="Matic I."/>
            <person name="Nassif X."/>
            <person name="Oztas S."/>
            <person name="Petit M.A."/>
            <person name="Pichon C."/>
            <person name="Rouy Z."/>
            <person name="Ruf C.S."/>
            <person name="Schneider D."/>
            <person name="Tourret J."/>
            <person name="Vacherie B."/>
            <person name="Vallenet D."/>
            <person name="Medigue C."/>
            <person name="Rocha E.P.C."/>
            <person name="Denamur E."/>
        </authorList>
    </citation>
    <scope>NUCLEOTIDE SEQUENCE [LARGE SCALE GENOMIC DNA]</scope>
    <source>
        <strain>ATCC 35469 / DSM 13698 / BCRC 15582 / CCUG 18766 / IAM 14443 / JCM 21226 / LMG 7866 / NBRC 102419 / NCTC 12128 / CDC 0568-73</strain>
    </source>
</reference>
<organism>
    <name type="scientific">Escherichia fergusonii (strain ATCC 35469 / DSM 13698 / CCUG 18766 / IAM 14443 / JCM 21226 / LMG 7866 / NBRC 102419 / NCTC 12128 / CDC 0568-73)</name>
    <dbReference type="NCBI Taxonomy" id="585054"/>
    <lineage>
        <taxon>Bacteria</taxon>
        <taxon>Pseudomonadati</taxon>
        <taxon>Pseudomonadota</taxon>
        <taxon>Gammaproteobacteria</taxon>
        <taxon>Enterobacterales</taxon>
        <taxon>Enterobacteriaceae</taxon>
        <taxon>Escherichia</taxon>
    </lineage>
</organism>
<gene>
    <name evidence="1" type="primary">gcvH</name>
    <name type="ordered locus">EFER_2840</name>
</gene>
<name>GCSH_ESCF3</name>